<proteinExistence type="evidence at protein level"/>
<sequence length="90" mass="10147">MSAVPFTRVLLISGFLAHLLLSTFVTLTVCKEVTEESDDLSKRNVLQRQLWAVGSFMGKKSLENTNRRSDEDMEISALFRGSPLKVKRSD</sequence>
<name>LITP_PHYSA</name>
<evidence type="ECO:0000255" key="1"/>
<evidence type="ECO:0000269" key="2">
    <source>
    </source>
</evidence>
<evidence type="ECO:0000305" key="3"/>
<protein>
    <recommendedName>
        <fullName>[Phe8]-phyllolitorin</fullName>
    </recommendedName>
</protein>
<reference key="1">
    <citation type="journal article" date="1994" name="Mol. Endocrinol.">
        <title>Cloning of complementary DNAs encoding the amphibian bombesin-like peptides Phe8 and Leu8 phyllolitorin from Phyllomedusa sauvagei: potential role of U to C RNA editing in generating neuropeptide diversity.</title>
        <authorList>
            <person name="Nagalla S.R."/>
            <person name="Barry B.J."/>
            <person name="Spindel E.R."/>
        </authorList>
    </citation>
    <scope>NUCLEOTIDE SEQUENCE [MRNA]</scope>
</reference>
<reference key="2">
    <citation type="journal article" date="1985" name="Peptides 6 Suppl.">
        <title>Phyllomedusa skin: a huge factory and store-house of a variety of active peptides.</title>
        <authorList>
            <person name="Erspamer V."/>
            <person name="Melchiorri P."/>
            <person name="Falconieri-Erspamer G."/>
            <person name="Montecucchi P.C."/>
            <person name="de Castiglione R."/>
        </authorList>
    </citation>
    <scope>PROTEIN SEQUENCE OF 49-57</scope>
    <scope>PYROGLUTAMATE FORMATION AT GLN-49</scope>
    <scope>AMIDATION AT MET-57</scope>
    <source>
        <tissue>Skin secretion</tissue>
    </source>
</reference>
<dbReference type="EMBL" id="S77226">
    <property type="protein sequence ID" value="AAB32788.1"/>
    <property type="molecule type" value="mRNA"/>
</dbReference>
<dbReference type="PIR" id="B57058">
    <property type="entry name" value="B57058"/>
</dbReference>
<dbReference type="GO" id="GO:0005576">
    <property type="term" value="C:extracellular region"/>
    <property type="evidence" value="ECO:0007669"/>
    <property type="project" value="UniProtKB-SubCell"/>
</dbReference>
<dbReference type="GO" id="GO:0006952">
    <property type="term" value="P:defense response"/>
    <property type="evidence" value="ECO:0007669"/>
    <property type="project" value="UniProtKB-KW"/>
</dbReference>
<dbReference type="GO" id="GO:0007218">
    <property type="term" value="P:neuropeptide signaling pathway"/>
    <property type="evidence" value="ECO:0007669"/>
    <property type="project" value="InterPro"/>
</dbReference>
<dbReference type="InterPro" id="IPR000874">
    <property type="entry name" value="Bombesin"/>
</dbReference>
<dbReference type="Pfam" id="PF02044">
    <property type="entry name" value="Bombesin"/>
    <property type="match status" value="1"/>
</dbReference>
<dbReference type="PROSITE" id="PS00257">
    <property type="entry name" value="BOMBESIN"/>
    <property type="match status" value="1"/>
</dbReference>
<accession>P08947</accession>
<keyword id="KW-0027">Amidation</keyword>
<keyword id="KW-0878">Amphibian defense peptide</keyword>
<keyword id="KW-0165">Cleavage on pair of basic residues</keyword>
<keyword id="KW-0903">Direct protein sequencing</keyword>
<keyword id="KW-0873">Pyrrolidone carboxylic acid</keyword>
<keyword id="KW-0964">Secreted</keyword>
<keyword id="KW-0732">Signal</keyword>
<comment type="subcellular location">
    <subcellularLocation>
        <location>Secreted</location>
    </subcellularLocation>
</comment>
<comment type="tissue specificity">
    <text>Expressed by the skin glands.</text>
</comment>
<comment type="similarity">
    <text evidence="3">Belongs to the bombesin/neuromedin-B/ranatensin family.</text>
</comment>
<feature type="signal peptide" evidence="1">
    <location>
        <begin position="1"/>
        <end position="30"/>
    </location>
</feature>
<feature type="propeptide" id="PRO_0000003011" evidence="2">
    <location>
        <begin position="31"/>
        <end position="48"/>
    </location>
</feature>
<feature type="peptide" id="PRO_0000003012" description="[Phe8]-phyllolitorin">
    <location>
        <begin position="49"/>
        <end position="57"/>
    </location>
</feature>
<feature type="propeptide" id="PRO_0000003013">
    <location>
        <begin position="61"/>
        <end position="90"/>
    </location>
</feature>
<feature type="modified residue" description="Pyrrolidone carboxylic acid" evidence="2">
    <location>
        <position position="49"/>
    </location>
</feature>
<feature type="modified residue" description="Methionine amide" evidence="2">
    <location>
        <position position="57"/>
    </location>
</feature>
<organism>
    <name type="scientific">Phyllomedusa sauvagei</name>
    <name type="common">Sauvage's leaf frog</name>
    <dbReference type="NCBI Taxonomy" id="8395"/>
    <lineage>
        <taxon>Eukaryota</taxon>
        <taxon>Metazoa</taxon>
        <taxon>Chordata</taxon>
        <taxon>Craniata</taxon>
        <taxon>Vertebrata</taxon>
        <taxon>Euteleostomi</taxon>
        <taxon>Amphibia</taxon>
        <taxon>Batrachia</taxon>
        <taxon>Anura</taxon>
        <taxon>Neobatrachia</taxon>
        <taxon>Hyloidea</taxon>
        <taxon>Hylidae</taxon>
        <taxon>Phyllomedusinae</taxon>
        <taxon>Phyllomedusa</taxon>
    </lineage>
</organism>